<evidence type="ECO:0000255" key="1">
    <source>
        <dbReference type="HAMAP-Rule" id="MF_01013"/>
    </source>
</evidence>
<keyword id="KW-0028">Amino-acid biosynthesis</keyword>
<keyword id="KW-0963">Cytoplasm</keyword>
<keyword id="KW-0368">Histidine biosynthesis</keyword>
<keyword id="KW-0456">Lyase</keyword>
<proteinExistence type="inferred from homology"/>
<comment type="function">
    <text evidence="1">IGPS catalyzes the conversion of PRFAR and glutamine to IGP, AICAR and glutamate. The HisF subunit catalyzes the cyclization activity that produces IGP and AICAR from PRFAR using the ammonia provided by the HisH subunit.</text>
</comment>
<comment type="catalytic activity">
    <reaction evidence="1">
        <text>5-[(5-phospho-1-deoxy-D-ribulos-1-ylimino)methylamino]-1-(5-phospho-beta-D-ribosyl)imidazole-4-carboxamide + L-glutamine = D-erythro-1-(imidazol-4-yl)glycerol 3-phosphate + 5-amino-1-(5-phospho-beta-D-ribosyl)imidazole-4-carboxamide + L-glutamate + H(+)</text>
        <dbReference type="Rhea" id="RHEA:24793"/>
        <dbReference type="ChEBI" id="CHEBI:15378"/>
        <dbReference type="ChEBI" id="CHEBI:29985"/>
        <dbReference type="ChEBI" id="CHEBI:58278"/>
        <dbReference type="ChEBI" id="CHEBI:58359"/>
        <dbReference type="ChEBI" id="CHEBI:58475"/>
        <dbReference type="ChEBI" id="CHEBI:58525"/>
        <dbReference type="EC" id="4.3.2.10"/>
    </reaction>
</comment>
<comment type="pathway">
    <text evidence="1">Amino-acid biosynthesis; L-histidine biosynthesis; L-histidine from 5-phospho-alpha-D-ribose 1-diphosphate: step 5/9.</text>
</comment>
<comment type="subunit">
    <text evidence="1">Heterodimer of HisH and HisF.</text>
</comment>
<comment type="subcellular location">
    <subcellularLocation>
        <location evidence="1">Cytoplasm</location>
    </subcellularLocation>
</comment>
<comment type="similarity">
    <text evidence="1">Belongs to the HisA/HisF family.</text>
</comment>
<organism>
    <name type="scientific">Mycobacterium sp. (strain MCS)</name>
    <dbReference type="NCBI Taxonomy" id="164756"/>
    <lineage>
        <taxon>Bacteria</taxon>
        <taxon>Bacillati</taxon>
        <taxon>Actinomycetota</taxon>
        <taxon>Actinomycetes</taxon>
        <taxon>Mycobacteriales</taxon>
        <taxon>Mycobacteriaceae</taxon>
        <taxon>Mycobacterium</taxon>
    </lineage>
</organism>
<dbReference type="EC" id="4.3.2.10" evidence="1"/>
<dbReference type="EMBL" id="CP000384">
    <property type="protein sequence ID" value="ABG09164.1"/>
    <property type="molecule type" value="Genomic_DNA"/>
</dbReference>
<dbReference type="SMR" id="Q1B7H0"/>
<dbReference type="KEGG" id="mmc:Mmcs_3057"/>
<dbReference type="HOGENOM" id="CLU_048577_4_0_11"/>
<dbReference type="BioCyc" id="MSP164756:G1G6O-3120-MONOMER"/>
<dbReference type="UniPathway" id="UPA00031">
    <property type="reaction ID" value="UER00010"/>
</dbReference>
<dbReference type="GO" id="GO:0005737">
    <property type="term" value="C:cytoplasm"/>
    <property type="evidence" value="ECO:0007669"/>
    <property type="project" value="UniProtKB-SubCell"/>
</dbReference>
<dbReference type="GO" id="GO:0000107">
    <property type="term" value="F:imidazoleglycerol-phosphate synthase activity"/>
    <property type="evidence" value="ECO:0007669"/>
    <property type="project" value="UniProtKB-UniRule"/>
</dbReference>
<dbReference type="GO" id="GO:0016829">
    <property type="term" value="F:lyase activity"/>
    <property type="evidence" value="ECO:0007669"/>
    <property type="project" value="UniProtKB-KW"/>
</dbReference>
<dbReference type="GO" id="GO:0000105">
    <property type="term" value="P:L-histidine biosynthetic process"/>
    <property type="evidence" value="ECO:0007669"/>
    <property type="project" value="UniProtKB-UniRule"/>
</dbReference>
<dbReference type="CDD" id="cd04731">
    <property type="entry name" value="HisF"/>
    <property type="match status" value="1"/>
</dbReference>
<dbReference type="FunFam" id="3.20.20.70:FF:000006">
    <property type="entry name" value="Imidazole glycerol phosphate synthase subunit HisF"/>
    <property type="match status" value="1"/>
</dbReference>
<dbReference type="Gene3D" id="3.20.20.70">
    <property type="entry name" value="Aldolase class I"/>
    <property type="match status" value="1"/>
</dbReference>
<dbReference type="HAMAP" id="MF_01013">
    <property type="entry name" value="HisF"/>
    <property type="match status" value="1"/>
</dbReference>
<dbReference type="InterPro" id="IPR013785">
    <property type="entry name" value="Aldolase_TIM"/>
</dbReference>
<dbReference type="InterPro" id="IPR006062">
    <property type="entry name" value="His_biosynth"/>
</dbReference>
<dbReference type="InterPro" id="IPR004651">
    <property type="entry name" value="HisF"/>
</dbReference>
<dbReference type="InterPro" id="IPR050064">
    <property type="entry name" value="IGPS_HisA/HisF"/>
</dbReference>
<dbReference type="InterPro" id="IPR011060">
    <property type="entry name" value="RibuloseP-bd_barrel"/>
</dbReference>
<dbReference type="NCBIfam" id="TIGR00735">
    <property type="entry name" value="hisF"/>
    <property type="match status" value="1"/>
</dbReference>
<dbReference type="PANTHER" id="PTHR21235:SF2">
    <property type="entry name" value="IMIDAZOLE GLYCEROL PHOSPHATE SYNTHASE HISHF"/>
    <property type="match status" value="1"/>
</dbReference>
<dbReference type="PANTHER" id="PTHR21235">
    <property type="entry name" value="IMIDAZOLE GLYCEROL PHOSPHATE SYNTHASE SUBUNIT HISF/H IGP SYNTHASE SUBUNIT HISF/H"/>
    <property type="match status" value="1"/>
</dbReference>
<dbReference type="Pfam" id="PF00977">
    <property type="entry name" value="His_biosynth"/>
    <property type="match status" value="1"/>
</dbReference>
<dbReference type="SUPFAM" id="SSF51366">
    <property type="entry name" value="Ribulose-phoshate binding barrel"/>
    <property type="match status" value="1"/>
</dbReference>
<sequence>MAADRGLAVRVIPCLDVDAGRVVKGVNFENLRDAGDPVELAAVYDAEGADELTFLDVTASSSGRSTMLDVVRRTAEQVFIPLTVGGGVRAVADVDALLRAGADKVSVNTAAIARPELLAELARQFGSQCIVLSVDARTVPQGEQPTPSGWEVTTHGGRRGTGIDAVEWATRGAELGVGEILLNSMDFDGTKAGFDLPMLRAVRGAVTVPVIASGGAGAVEHFAPAVHAGADAVLAASVFHFKELTIGQVKAAMAAEGITVR</sequence>
<accession>Q1B7H0</accession>
<reference key="1">
    <citation type="submission" date="2006-06" db="EMBL/GenBank/DDBJ databases">
        <title>Complete sequence of chromosome of Mycobacterium sp. MCS.</title>
        <authorList>
            <consortium name="US DOE Joint Genome Institute"/>
            <person name="Copeland A."/>
            <person name="Lucas S."/>
            <person name="Lapidus A."/>
            <person name="Barry K."/>
            <person name="Detter J.C."/>
            <person name="Glavina del Rio T."/>
            <person name="Hammon N."/>
            <person name="Israni S."/>
            <person name="Dalin E."/>
            <person name="Tice H."/>
            <person name="Pitluck S."/>
            <person name="Martinez M."/>
            <person name="Schmutz J."/>
            <person name="Larimer F."/>
            <person name="Land M."/>
            <person name="Hauser L."/>
            <person name="Kyrpides N."/>
            <person name="Kim E."/>
            <person name="Miller C.D."/>
            <person name="Hughes J.E."/>
            <person name="Anderson A.J."/>
            <person name="Sims R.C."/>
            <person name="Richardson P."/>
        </authorList>
    </citation>
    <scope>NUCLEOTIDE SEQUENCE [LARGE SCALE GENOMIC DNA]</scope>
    <source>
        <strain>MCS</strain>
    </source>
</reference>
<name>HIS6_MYCSS</name>
<gene>
    <name evidence="1" type="primary">hisF</name>
    <name type="ordered locus">Mmcs_3057</name>
</gene>
<feature type="chain" id="PRO_1000063097" description="Imidazole glycerol phosphate synthase subunit HisF">
    <location>
        <begin position="1"/>
        <end position="261"/>
    </location>
</feature>
<feature type="active site" evidence="1">
    <location>
        <position position="16"/>
    </location>
</feature>
<feature type="active site" evidence="1">
    <location>
        <position position="135"/>
    </location>
</feature>
<protein>
    <recommendedName>
        <fullName evidence="1">Imidazole glycerol phosphate synthase subunit HisF</fullName>
        <ecNumber evidence="1">4.3.2.10</ecNumber>
    </recommendedName>
    <alternativeName>
        <fullName evidence="1">IGP synthase cyclase subunit</fullName>
    </alternativeName>
    <alternativeName>
        <fullName evidence="1">IGP synthase subunit HisF</fullName>
    </alternativeName>
    <alternativeName>
        <fullName evidence="1">ImGP synthase subunit HisF</fullName>
        <shortName evidence="1">IGPS subunit HisF</shortName>
    </alternativeName>
</protein>